<protein>
    <recommendedName>
        <fullName>BTB/POZ domain-containing protein 19</fullName>
    </recommendedName>
</protein>
<organism>
    <name type="scientific">Bos taurus</name>
    <name type="common">Bovine</name>
    <dbReference type="NCBI Taxonomy" id="9913"/>
    <lineage>
        <taxon>Eukaryota</taxon>
        <taxon>Metazoa</taxon>
        <taxon>Chordata</taxon>
        <taxon>Craniata</taxon>
        <taxon>Vertebrata</taxon>
        <taxon>Euteleostomi</taxon>
        <taxon>Mammalia</taxon>
        <taxon>Eutheria</taxon>
        <taxon>Laurasiatheria</taxon>
        <taxon>Artiodactyla</taxon>
        <taxon>Ruminantia</taxon>
        <taxon>Pecora</taxon>
        <taxon>Bovidae</taxon>
        <taxon>Bovinae</taxon>
        <taxon>Bos</taxon>
    </lineage>
</organism>
<accession>A6QPA3</accession>
<dbReference type="EMBL" id="BC149224">
    <property type="protein sequence ID" value="AAI49225.1"/>
    <property type="molecule type" value="mRNA"/>
</dbReference>
<dbReference type="RefSeq" id="NP_001094711.1">
    <property type="nucleotide sequence ID" value="NM_001101241.1"/>
</dbReference>
<dbReference type="SMR" id="A6QPA3"/>
<dbReference type="FunCoup" id="A6QPA3">
    <property type="interactions" value="94"/>
</dbReference>
<dbReference type="STRING" id="9913.ENSBTAP00000049973"/>
<dbReference type="PaxDb" id="9913-ENSBTAP00000049973"/>
<dbReference type="GeneID" id="615438"/>
<dbReference type="KEGG" id="bta:615438"/>
<dbReference type="CTD" id="149478"/>
<dbReference type="VEuPathDB" id="HostDB:ENSBTAG00000039529"/>
<dbReference type="eggNOG" id="KOG4350">
    <property type="taxonomic scope" value="Eukaryota"/>
</dbReference>
<dbReference type="HOGENOM" id="CLU_077764_0_0_1"/>
<dbReference type="InParanoid" id="A6QPA3"/>
<dbReference type="OMA" id="AWRFHAL"/>
<dbReference type="OrthoDB" id="45365at2759"/>
<dbReference type="TreeFam" id="TF330633"/>
<dbReference type="Proteomes" id="UP000009136">
    <property type="component" value="Chromosome 3"/>
</dbReference>
<dbReference type="Bgee" id="ENSBTAG00000039529">
    <property type="expression patterns" value="Expressed in adenohypophysis and 101 other cell types or tissues"/>
</dbReference>
<dbReference type="CDD" id="cd18494">
    <property type="entry name" value="BACK_BTBD19"/>
    <property type="match status" value="1"/>
</dbReference>
<dbReference type="CDD" id="cd18294">
    <property type="entry name" value="BTB_POZ_BTBD19"/>
    <property type="match status" value="1"/>
</dbReference>
<dbReference type="Gene3D" id="1.25.40.420">
    <property type="match status" value="1"/>
</dbReference>
<dbReference type="Gene3D" id="3.30.710.10">
    <property type="entry name" value="Potassium Channel Kv1.1, Chain A"/>
    <property type="match status" value="1"/>
</dbReference>
<dbReference type="InterPro" id="IPR011705">
    <property type="entry name" value="BACK"/>
</dbReference>
<dbReference type="InterPro" id="IPR000210">
    <property type="entry name" value="BTB/POZ_dom"/>
</dbReference>
<dbReference type="InterPro" id="IPR042846">
    <property type="entry name" value="BTBD19"/>
</dbReference>
<dbReference type="InterPro" id="IPR011333">
    <property type="entry name" value="SKP1/BTB/POZ_sf"/>
</dbReference>
<dbReference type="PANTHER" id="PTHR46965">
    <property type="entry name" value="BTB/POZ DOMAIN-CONTAINING PROTEIN 19"/>
    <property type="match status" value="1"/>
</dbReference>
<dbReference type="PANTHER" id="PTHR46965:SF1">
    <property type="entry name" value="BTB_POZ DOMAIN-CONTAINING PROTEIN 19"/>
    <property type="match status" value="1"/>
</dbReference>
<dbReference type="Pfam" id="PF07707">
    <property type="entry name" value="BACK"/>
    <property type="match status" value="1"/>
</dbReference>
<dbReference type="Pfam" id="PF00651">
    <property type="entry name" value="BTB"/>
    <property type="match status" value="1"/>
</dbReference>
<dbReference type="SMART" id="SM00875">
    <property type="entry name" value="BACK"/>
    <property type="match status" value="1"/>
</dbReference>
<dbReference type="SMART" id="SM00225">
    <property type="entry name" value="BTB"/>
    <property type="match status" value="1"/>
</dbReference>
<dbReference type="SUPFAM" id="SSF54695">
    <property type="entry name" value="POZ domain"/>
    <property type="match status" value="1"/>
</dbReference>
<dbReference type="PROSITE" id="PS50097">
    <property type="entry name" value="BTB"/>
    <property type="match status" value="1"/>
</dbReference>
<proteinExistence type="evidence at transcript level"/>
<gene>
    <name type="primary">BTBD19</name>
</gene>
<evidence type="ECO:0000255" key="1">
    <source>
        <dbReference type="PROSITE-ProRule" id="PRU00037"/>
    </source>
</evidence>
<feature type="chain" id="PRO_0000394238" description="BTB/POZ domain-containing protein 19">
    <location>
        <begin position="1"/>
        <end position="291"/>
    </location>
</feature>
<feature type="domain" description="BTB" evidence="1">
    <location>
        <begin position="29"/>
        <end position="98"/>
    </location>
</feature>
<feature type="domain" description="BACK">
    <location>
        <begin position="134"/>
        <end position="234"/>
    </location>
</feature>
<reference key="1">
    <citation type="submission" date="2007-07" db="EMBL/GenBank/DDBJ databases">
        <authorList>
            <consortium name="NIH - Mammalian Gene Collection (MGC) project"/>
        </authorList>
    </citation>
    <scope>NUCLEOTIDE SEQUENCE [LARGE SCALE MRNA]</scope>
    <source>
        <strain>Hereford</strain>
        <tissue>Ascending colon</tissue>
    </source>
</reference>
<name>BTBDJ_BOVIN</name>
<sequence>METPGLVVHGEAAPFSTALRSLVNNPLYSDVRFVVGQERQEVFAHRCLLACRCNFFQRLLSSEPGPGVPSPVVLSTVPAEAFLAVLEFLYTNSAKLQRHSVLEVLTAAVEYGLEELRELCLEFVVKALDVELVCEALQVAVTFGLGQLQERCVAFIEAHSQETLRTRGFLELSAPALLPLLRSDKLCVDEAELVLAARSWARVGAAVLERPVAEVAAPVVRELRLALLAPAELSALEEQNRREPLIPVEQIVEAWKCHALRRGDAARGTPCRRRRGTLPREHHRFLDLPFK</sequence>
<keyword id="KW-1185">Reference proteome</keyword>